<organism>
    <name type="scientific">Geotalea uraniireducens (strain Rf4)</name>
    <name type="common">Geobacter uraniireducens</name>
    <dbReference type="NCBI Taxonomy" id="351605"/>
    <lineage>
        <taxon>Bacteria</taxon>
        <taxon>Pseudomonadati</taxon>
        <taxon>Thermodesulfobacteriota</taxon>
        <taxon>Desulfuromonadia</taxon>
        <taxon>Geobacterales</taxon>
        <taxon>Geobacteraceae</taxon>
        <taxon>Geotalea</taxon>
    </lineage>
</organism>
<name>NADA_GEOUR</name>
<sequence length="304" mass="33897">MYQDEIKHEIKTLLGERNGILLAHNYMRDEVQEIADITGDSLGLSIEAAKTDASVIVFCGVHFMAESASILAPDKTVLLPRLDAGCPMADMVTVPELQELKARHPGVPVVTYVNSSAAIKAISDICCTSANAVKVVKSLPESEIIFVPDRNLGRYVARFTDKTFHYWDGYCPTHERLKPDAVIRLKQEFPDALFICHPECNPEVEALADHVCSTTGMYDYCRKNPARRFIIGTEAGILYRLKKENPDKEFILASPALVCPNMKLTSLEDILESLRTMTPVVKVPEEIRIPAKQALDRMLAIPRD</sequence>
<accession>A5GDD6</accession>
<dbReference type="EC" id="2.5.1.72" evidence="1"/>
<dbReference type="EMBL" id="CP000698">
    <property type="protein sequence ID" value="ABQ24415.1"/>
    <property type="molecule type" value="Genomic_DNA"/>
</dbReference>
<dbReference type="RefSeq" id="WP_011937144.1">
    <property type="nucleotide sequence ID" value="NC_009483.1"/>
</dbReference>
<dbReference type="SMR" id="A5GDD6"/>
<dbReference type="STRING" id="351605.Gura_0199"/>
<dbReference type="KEGG" id="gur:Gura_0199"/>
<dbReference type="HOGENOM" id="CLU_047382_0_0_7"/>
<dbReference type="OrthoDB" id="9801204at2"/>
<dbReference type="UniPathway" id="UPA00253">
    <property type="reaction ID" value="UER00327"/>
</dbReference>
<dbReference type="Proteomes" id="UP000006695">
    <property type="component" value="Chromosome"/>
</dbReference>
<dbReference type="GO" id="GO:0005829">
    <property type="term" value="C:cytosol"/>
    <property type="evidence" value="ECO:0007669"/>
    <property type="project" value="TreeGrafter"/>
</dbReference>
<dbReference type="GO" id="GO:0051539">
    <property type="term" value="F:4 iron, 4 sulfur cluster binding"/>
    <property type="evidence" value="ECO:0007669"/>
    <property type="project" value="UniProtKB-KW"/>
</dbReference>
<dbReference type="GO" id="GO:0046872">
    <property type="term" value="F:metal ion binding"/>
    <property type="evidence" value="ECO:0007669"/>
    <property type="project" value="UniProtKB-KW"/>
</dbReference>
<dbReference type="GO" id="GO:0008987">
    <property type="term" value="F:quinolinate synthetase A activity"/>
    <property type="evidence" value="ECO:0007669"/>
    <property type="project" value="UniProtKB-UniRule"/>
</dbReference>
<dbReference type="GO" id="GO:0034628">
    <property type="term" value="P:'de novo' NAD biosynthetic process from L-aspartate"/>
    <property type="evidence" value="ECO:0007669"/>
    <property type="project" value="TreeGrafter"/>
</dbReference>
<dbReference type="FunFam" id="3.40.50.10800:FF:000001">
    <property type="entry name" value="Quinolinate synthase A"/>
    <property type="match status" value="1"/>
</dbReference>
<dbReference type="FunFam" id="3.40.50.10800:FF:000003">
    <property type="entry name" value="Quinolinate synthase A"/>
    <property type="match status" value="1"/>
</dbReference>
<dbReference type="Gene3D" id="3.40.50.10800">
    <property type="entry name" value="NadA-like"/>
    <property type="match status" value="3"/>
</dbReference>
<dbReference type="HAMAP" id="MF_00568">
    <property type="entry name" value="NadA_type2"/>
    <property type="match status" value="1"/>
</dbReference>
<dbReference type="InterPro" id="IPR003473">
    <property type="entry name" value="NadA"/>
</dbReference>
<dbReference type="InterPro" id="IPR036094">
    <property type="entry name" value="NadA_sf"/>
</dbReference>
<dbReference type="InterPro" id="IPR023066">
    <property type="entry name" value="Quinolinate_synth_type2"/>
</dbReference>
<dbReference type="NCBIfam" id="TIGR00550">
    <property type="entry name" value="nadA"/>
    <property type="match status" value="1"/>
</dbReference>
<dbReference type="NCBIfam" id="NF006878">
    <property type="entry name" value="PRK09375.1-2"/>
    <property type="match status" value="1"/>
</dbReference>
<dbReference type="PANTHER" id="PTHR30573:SF0">
    <property type="entry name" value="QUINOLINATE SYNTHASE, CHLOROPLASTIC"/>
    <property type="match status" value="1"/>
</dbReference>
<dbReference type="PANTHER" id="PTHR30573">
    <property type="entry name" value="QUINOLINATE SYNTHETASE A"/>
    <property type="match status" value="1"/>
</dbReference>
<dbReference type="Pfam" id="PF02445">
    <property type="entry name" value="NadA"/>
    <property type="match status" value="1"/>
</dbReference>
<dbReference type="SUPFAM" id="SSF142754">
    <property type="entry name" value="NadA-like"/>
    <property type="match status" value="1"/>
</dbReference>
<keyword id="KW-0004">4Fe-4S</keyword>
<keyword id="KW-0963">Cytoplasm</keyword>
<keyword id="KW-0408">Iron</keyword>
<keyword id="KW-0411">Iron-sulfur</keyword>
<keyword id="KW-0479">Metal-binding</keyword>
<keyword id="KW-0662">Pyridine nucleotide biosynthesis</keyword>
<keyword id="KW-1185">Reference proteome</keyword>
<keyword id="KW-0808">Transferase</keyword>
<reference key="1">
    <citation type="submission" date="2007-05" db="EMBL/GenBank/DDBJ databases">
        <title>Complete sequence of Geobacter uraniireducens Rf4.</title>
        <authorList>
            <consortium name="US DOE Joint Genome Institute"/>
            <person name="Copeland A."/>
            <person name="Lucas S."/>
            <person name="Lapidus A."/>
            <person name="Barry K."/>
            <person name="Detter J.C."/>
            <person name="Glavina del Rio T."/>
            <person name="Hammon N."/>
            <person name="Israni S."/>
            <person name="Dalin E."/>
            <person name="Tice H."/>
            <person name="Pitluck S."/>
            <person name="Chertkov O."/>
            <person name="Brettin T."/>
            <person name="Bruce D."/>
            <person name="Han C."/>
            <person name="Schmutz J."/>
            <person name="Larimer F."/>
            <person name="Land M."/>
            <person name="Hauser L."/>
            <person name="Kyrpides N."/>
            <person name="Mikhailova N."/>
            <person name="Shelobolina E."/>
            <person name="Aklujkar M."/>
            <person name="Lovley D."/>
            <person name="Richardson P."/>
        </authorList>
    </citation>
    <scope>NUCLEOTIDE SEQUENCE [LARGE SCALE GENOMIC DNA]</scope>
    <source>
        <strain>ATCC BAA-1134 / JCM 13001 / Rf4</strain>
    </source>
</reference>
<feature type="chain" id="PRO_1000082316" description="Quinolinate synthase">
    <location>
        <begin position="1"/>
        <end position="304"/>
    </location>
</feature>
<feature type="binding site" evidence="1">
    <location>
        <position position="24"/>
    </location>
    <ligand>
        <name>iminosuccinate</name>
        <dbReference type="ChEBI" id="CHEBI:77875"/>
    </ligand>
</feature>
<feature type="binding site" evidence="1">
    <location>
        <position position="41"/>
    </location>
    <ligand>
        <name>iminosuccinate</name>
        <dbReference type="ChEBI" id="CHEBI:77875"/>
    </ligand>
</feature>
<feature type="binding site" evidence="1">
    <location>
        <position position="86"/>
    </location>
    <ligand>
        <name>[4Fe-4S] cluster</name>
        <dbReference type="ChEBI" id="CHEBI:49883"/>
    </ligand>
</feature>
<feature type="binding site" evidence="1">
    <location>
        <begin position="112"/>
        <end position="114"/>
    </location>
    <ligand>
        <name>iminosuccinate</name>
        <dbReference type="ChEBI" id="CHEBI:77875"/>
    </ligand>
</feature>
<feature type="binding site" evidence="1">
    <location>
        <position position="129"/>
    </location>
    <ligand>
        <name>iminosuccinate</name>
        <dbReference type="ChEBI" id="CHEBI:77875"/>
    </ligand>
</feature>
<feature type="binding site" evidence="1">
    <location>
        <position position="171"/>
    </location>
    <ligand>
        <name>[4Fe-4S] cluster</name>
        <dbReference type="ChEBI" id="CHEBI:49883"/>
    </ligand>
</feature>
<feature type="binding site" evidence="1">
    <location>
        <begin position="197"/>
        <end position="199"/>
    </location>
    <ligand>
        <name>iminosuccinate</name>
        <dbReference type="ChEBI" id="CHEBI:77875"/>
    </ligand>
</feature>
<feature type="binding site" evidence="1">
    <location>
        <position position="214"/>
    </location>
    <ligand>
        <name>iminosuccinate</name>
        <dbReference type="ChEBI" id="CHEBI:77875"/>
    </ligand>
</feature>
<feature type="binding site" evidence="1">
    <location>
        <position position="259"/>
    </location>
    <ligand>
        <name>[4Fe-4S] cluster</name>
        <dbReference type="ChEBI" id="CHEBI:49883"/>
    </ligand>
</feature>
<gene>
    <name evidence="1" type="primary">nadA</name>
    <name type="ordered locus">Gura_0199</name>
</gene>
<evidence type="ECO:0000255" key="1">
    <source>
        <dbReference type="HAMAP-Rule" id="MF_00568"/>
    </source>
</evidence>
<protein>
    <recommendedName>
        <fullName evidence="1">Quinolinate synthase</fullName>
        <ecNumber evidence="1">2.5.1.72</ecNumber>
    </recommendedName>
</protein>
<proteinExistence type="inferred from homology"/>
<comment type="function">
    <text evidence="1">Catalyzes the condensation of iminoaspartate with dihydroxyacetone phosphate to form quinolinate.</text>
</comment>
<comment type="catalytic activity">
    <reaction evidence="1">
        <text>iminosuccinate + dihydroxyacetone phosphate = quinolinate + phosphate + 2 H2O + H(+)</text>
        <dbReference type="Rhea" id="RHEA:25888"/>
        <dbReference type="ChEBI" id="CHEBI:15377"/>
        <dbReference type="ChEBI" id="CHEBI:15378"/>
        <dbReference type="ChEBI" id="CHEBI:29959"/>
        <dbReference type="ChEBI" id="CHEBI:43474"/>
        <dbReference type="ChEBI" id="CHEBI:57642"/>
        <dbReference type="ChEBI" id="CHEBI:77875"/>
        <dbReference type="EC" id="2.5.1.72"/>
    </reaction>
    <physiologicalReaction direction="left-to-right" evidence="1">
        <dbReference type="Rhea" id="RHEA:25889"/>
    </physiologicalReaction>
</comment>
<comment type="cofactor">
    <cofactor evidence="1">
        <name>[4Fe-4S] cluster</name>
        <dbReference type="ChEBI" id="CHEBI:49883"/>
    </cofactor>
    <text evidence="1">Binds 1 [4Fe-4S] cluster per subunit.</text>
</comment>
<comment type="pathway">
    <text evidence="1">Cofactor biosynthesis; NAD(+) biosynthesis; quinolinate from iminoaspartate: step 1/1.</text>
</comment>
<comment type="subcellular location">
    <subcellularLocation>
        <location evidence="1">Cytoplasm</location>
    </subcellularLocation>
</comment>
<comment type="similarity">
    <text evidence="1">Belongs to the quinolinate synthase family. Type 2 subfamily.</text>
</comment>